<protein>
    <recommendedName>
        <fullName>Triosephosphate isomerase</fullName>
        <shortName>TIM</shortName>
        <ecNumber>5.3.1.1</ecNumber>
    </recommendedName>
    <alternativeName>
        <fullName>Triose-phosphate isomerase</fullName>
    </alternativeName>
</protein>
<keyword id="KW-0312">Gluconeogenesis</keyword>
<keyword id="KW-0324">Glycolysis</keyword>
<keyword id="KW-0413">Isomerase</keyword>
<gene>
    <name type="primary">Tpi</name>
</gene>
<proteinExistence type="inferred from homology"/>
<name>TPIS_ANOME</name>
<comment type="catalytic activity">
    <reaction evidence="1">
        <text>D-glyceraldehyde 3-phosphate = dihydroxyacetone phosphate</text>
        <dbReference type="Rhea" id="RHEA:18585"/>
        <dbReference type="ChEBI" id="CHEBI:57642"/>
        <dbReference type="ChEBI" id="CHEBI:59776"/>
        <dbReference type="EC" id="5.3.1.1"/>
    </reaction>
</comment>
<comment type="pathway">
    <text evidence="1">Carbohydrate biosynthesis; gluconeogenesis.</text>
</comment>
<comment type="pathway">
    <text evidence="1">Carbohydrate degradation; glycolysis; D-glyceraldehyde 3-phosphate from glycerone phosphate: step 1/1.</text>
</comment>
<comment type="subunit">
    <text evidence="1">Homodimer.</text>
</comment>
<comment type="similarity">
    <text evidence="1">Belongs to the triosephosphate isomerase family.</text>
</comment>
<sequence>SITELCKTLSAGPLDPNTEVVVGCPAPYLSLARSLLPETIGVAAQNCYKVAKGAFTGEISPAMLKDLGLGWVILGHSERRAIFGETDELIAEKVAHALGEGLKVIACIGETLQEREAGQTEAVCFRQTKAIAAQVKDWSNVVIAYEPVWAIGTGKTATPEQAQEVHAALRKWFTENVSADVSNAIRIQYGGSVTAANCRELAGKPD</sequence>
<accession>P91895</accession>
<dbReference type="EC" id="5.3.1.1"/>
<dbReference type="EMBL" id="U82707">
    <property type="protein sequence ID" value="AAB48448.1"/>
    <property type="molecule type" value="Genomic_DNA"/>
</dbReference>
<dbReference type="SMR" id="P91895"/>
<dbReference type="STRING" id="30066.P91895"/>
<dbReference type="VEuPathDB" id="VectorBase:AMEM003393"/>
<dbReference type="VEuPathDB" id="VectorBase:AMEM21_000686"/>
<dbReference type="UniPathway" id="UPA00109">
    <property type="reaction ID" value="UER00189"/>
</dbReference>
<dbReference type="UniPathway" id="UPA00138"/>
<dbReference type="Proteomes" id="UP000075903">
    <property type="component" value="Unassembled WGS sequence"/>
</dbReference>
<dbReference type="GO" id="GO:0005829">
    <property type="term" value="C:cytosol"/>
    <property type="evidence" value="ECO:0007669"/>
    <property type="project" value="TreeGrafter"/>
</dbReference>
<dbReference type="GO" id="GO:0004807">
    <property type="term" value="F:triose-phosphate isomerase activity"/>
    <property type="evidence" value="ECO:0007669"/>
    <property type="project" value="UniProtKB-EC"/>
</dbReference>
<dbReference type="GO" id="GO:0006094">
    <property type="term" value="P:gluconeogenesis"/>
    <property type="evidence" value="ECO:0007669"/>
    <property type="project" value="UniProtKB-UniPathway"/>
</dbReference>
<dbReference type="GO" id="GO:0046166">
    <property type="term" value="P:glyceraldehyde-3-phosphate biosynthetic process"/>
    <property type="evidence" value="ECO:0007669"/>
    <property type="project" value="TreeGrafter"/>
</dbReference>
<dbReference type="GO" id="GO:0019563">
    <property type="term" value="P:glycerol catabolic process"/>
    <property type="evidence" value="ECO:0007669"/>
    <property type="project" value="TreeGrafter"/>
</dbReference>
<dbReference type="GO" id="GO:0006096">
    <property type="term" value="P:glycolytic process"/>
    <property type="evidence" value="ECO:0007669"/>
    <property type="project" value="UniProtKB-UniPathway"/>
</dbReference>
<dbReference type="CDD" id="cd00311">
    <property type="entry name" value="TIM"/>
    <property type="match status" value="1"/>
</dbReference>
<dbReference type="FunFam" id="3.20.20.70:FF:000016">
    <property type="entry name" value="Triosephosphate isomerase"/>
    <property type="match status" value="1"/>
</dbReference>
<dbReference type="Gene3D" id="3.20.20.70">
    <property type="entry name" value="Aldolase class I"/>
    <property type="match status" value="1"/>
</dbReference>
<dbReference type="HAMAP" id="MF_00147_B">
    <property type="entry name" value="TIM_B"/>
    <property type="match status" value="1"/>
</dbReference>
<dbReference type="InterPro" id="IPR013785">
    <property type="entry name" value="Aldolase_TIM"/>
</dbReference>
<dbReference type="InterPro" id="IPR035990">
    <property type="entry name" value="TIM_sf"/>
</dbReference>
<dbReference type="InterPro" id="IPR022896">
    <property type="entry name" value="TrioseP_Isoase_bac/euk"/>
</dbReference>
<dbReference type="InterPro" id="IPR000652">
    <property type="entry name" value="Triosephosphate_isomerase"/>
</dbReference>
<dbReference type="InterPro" id="IPR020861">
    <property type="entry name" value="Triosephosphate_isomerase_AS"/>
</dbReference>
<dbReference type="NCBIfam" id="TIGR00419">
    <property type="entry name" value="tim"/>
    <property type="match status" value="1"/>
</dbReference>
<dbReference type="PANTHER" id="PTHR21139">
    <property type="entry name" value="TRIOSEPHOSPHATE ISOMERASE"/>
    <property type="match status" value="1"/>
</dbReference>
<dbReference type="PANTHER" id="PTHR21139:SF2">
    <property type="entry name" value="TRIOSEPHOSPHATE ISOMERASE"/>
    <property type="match status" value="1"/>
</dbReference>
<dbReference type="Pfam" id="PF00121">
    <property type="entry name" value="TIM"/>
    <property type="match status" value="1"/>
</dbReference>
<dbReference type="SUPFAM" id="SSF51351">
    <property type="entry name" value="Triosephosphate isomerase (TIM)"/>
    <property type="match status" value="1"/>
</dbReference>
<dbReference type="PROSITE" id="PS00171">
    <property type="entry name" value="TIM_1"/>
    <property type="match status" value="1"/>
</dbReference>
<dbReference type="PROSITE" id="PS51440">
    <property type="entry name" value="TIM_2"/>
    <property type="match status" value="1"/>
</dbReference>
<evidence type="ECO:0000255" key="1">
    <source>
        <dbReference type="PROSITE-ProRule" id="PRU10127"/>
    </source>
</evidence>
<feature type="chain" id="PRO_0000090125" description="Triosephosphate isomerase">
    <location>
        <begin position="1" status="less than"/>
        <end position="206" status="greater than"/>
    </location>
</feature>
<feature type="active site" description="Electrophile" evidence="1">
    <location>
        <position position="76"/>
    </location>
</feature>
<feature type="active site" description="Proton acceptor" evidence="1">
    <location>
        <position position="146"/>
    </location>
</feature>
<feature type="non-terminal residue">
    <location>
        <position position="1"/>
    </location>
</feature>
<feature type="non-terminal residue">
    <location>
        <position position="206"/>
    </location>
</feature>
<organism>
    <name type="scientific">Anopheles merus</name>
    <name type="common">Mosquito</name>
    <dbReference type="NCBI Taxonomy" id="30066"/>
    <lineage>
        <taxon>Eukaryota</taxon>
        <taxon>Metazoa</taxon>
        <taxon>Ecdysozoa</taxon>
        <taxon>Arthropoda</taxon>
        <taxon>Hexapoda</taxon>
        <taxon>Insecta</taxon>
        <taxon>Pterygota</taxon>
        <taxon>Neoptera</taxon>
        <taxon>Endopterygota</taxon>
        <taxon>Diptera</taxon>
        <taxon>Nematocera</taxon>
        <taxon>Culicoidea</taxon>
        <taxon>Culicidae</taxon>
        <taxon>Anophelinae</taxon>
        <taxon>Anopheles</taxon>
    </lineage>
</organism>
<reference key="1">
    <citation type="journal article" date="1997" name="Biochim. Biophys. Acta">
        <title>Towards a reconciliation of the introns early or late views: triosephosphate isomerase genes from insects.</title>
        <authorList>
            <person name="Tyshenko M.G."/>
            <person name="Walker V.K."/>
        </authorList>
    </citation>
    <scope>NUCLEOTIDE SEQUENCE [GENOMIC DNA]</scope>
</reference>